<protein>
    <recommendedName>
        <fullName>Keratin-associated protein 10-2</fullName>
    </recommendedName>
    <alternativeName>
        <fullName>High sulfur keratin-associated protein 10.2</fullName>
    </alternativeName>
    <alternativeName>
        <fullName>Keratin-associated protein 10.2</fullName>
    </alternativeName>
    <alternativeName>
        <fullName>Keratin-associated protein 18-2</fullName>
    </alternativeName>
    <alternativeName>
        <fullName>Keratin-associated protein 18.2</fullName>
    </alternativeName>
</protein>
<comment type="function">
    <text>In the hair cortex, hair keratin intermediate filaments are embedded in an interfilamentous matrix, consisting of hair keratin-associated proteins (KRTAP), which are essential for the formation of a rigid and resistant hair shaft through their extensive disulfide bond cross-linking with abundant cysteine residues of hair keratins. The matrix proteins include the high-sulfur and high-glycine-tyrosine keratins.</text>
</comment>
<comment type="subunit">
    <text>Interacts with hair keratins.</text>
</comment>
<comment type="alternative products">
    <event type="alternative splicing"/>
    <isoform>
        <id>P60368-1</id>
        <name>1</name>
        <sequence type="displayed"/>
    </isoform>
    <text>A number of isoforms are produced.</text>
</comment>
<comment type="tissue specificity">
    <text evidence="1 2">Restricted to a narrow region of the hair fiber cuticle, lying approximately 20 cell layers above the apex of the dermal papilla of the hair root; not detected in any other tissues.</text>
</comment>
<comment type="similarity">
    <text evidence="3">Belongs to the KRTAP type 10 family.</text>
</comment>
<feature type="chain" id="PRO_0000185210" description="Keratin-associated protein 10-2">
    <location>
        <begin position="1"/>
        <end position="255"/>
    </location>
</feature>
<feature type="repeat" description="1">
    <location>
        <begin position="26"/>
        <end position="30"/>
    </location>
</feature>
<feature type="repeat" description="2">
    <location>
        <begin position="36"/>
        <end position="40"/>
    </location>
</feature>
<feature type="repeat" description="3">
    <location>
        <begin position="57"/>
        <end position="61"/>
    </location>
</feature>
<feature type="repeat" description="4">
    <location>
        <begin position="79"/>
        <end position="83"/>
    </location>
</feature>
<feature type="repeat" description="5">
    <location>
        <begin position="89"/>
        <end position="93"/>
    </location>
</feature>
<feature type="repeat" description="6">
    <location>
        <begin position="99"/>
        <end position="103"/>
    </location>
</feature>
<feature type="repeat" description="7">
    <location>
        <begin position="104"/>
        <end position="108"/>
    </location>
</feature>
<feature type="repeat" description="8">
    <location>
        <begin position="109"/>
        <end position="113"/>
    </location>
</feature>
<feature type="repeat" description="9">
    <location>
        <begin position="114"/>
        <end position="118"/>
    </location>
</feature>
<feature type="repeat" description="10">
    <location>
        <begin position="120"/>
        <end position="124"/>
    </location>
</feature>
<feature type="repeat" description="11">
    <location>
        <begin position="130"/>
        <end position="134"/>
    </location>
</feature>
<feature type="repeat" description="12">
    <location>
        <begin position="145"/>
        <end position="149"/>
    </location>
</feature>
<feature type="repeat" description="13">
    <location>
        <begin position="150"/>
        <end position="154"/>
    </location>
</feature>
<feature type="repeat" description="14">
    <location>
        <begin position="162"/>
        <end position="166"/>
    </location>
</feature>
<feature type="repeat" description="15">
    <location>
        <begin position="172"/>
        <end position="176"/>
    </location>
</feature>
<feature type="repeat" description="16">
    <location>
        <begin position="182"/>
        <end position="186"/>
    </location>
</feature>
<feature type="repeat" description="17">
    <location>
        <begin position="187"/>
        <end position="191"/>
    </location>
</feature>
<feature type="repeat" description="18">
    <location>
        <begin position="192"/>
        <end position="196"/>
    </location>
</feature>
<feature type="repeat" description="19">
    <location>
        <begin position="197"/>
        <end position="201"/>
    </location>
</feature>
<feature type="repeat" description="20">
    <location>
        <begin position="209"/>
        <end position="213"/>
    </location>
</feature>
<feature type="repeat" description="21">
    <location>
        <begin position="219"/>
        <end position="223"/>
    </location>
</feature>
<feature type="repeat" description="22">
    <location>
        <begin position="224"/>
        <end position="228"/>
    </location>
</feature>
<feature type="region of interest" description="22 X 5 AA repeats of C-C-X(3)">
    <location>
        <begin position="26"/>
        <end position="228"/>
    </location>
</feature>
<feature type="sequence variant" id="VAR_017690" description="In dbSNP:rs233240." evidence="2">
    <original>N</original>
    <variation>D</variation>
    <location>
        <position position="15"/>
    </location>
</feature>
<feature type="sequence variant" id="VAR_017691" description="In dbSNP:rs478967." evidence="2">
    <original>P</original>
    <variation>T</variation>
    <location>
        <position position="107"/>
    </location>
</feature>
<feature type="sequence variant" id="VAR_017692" description="In dbSNP:rs233239." evidence="2">
    <original>A</original>
    <variation>P</variation>
    <location>
        <position position="117"/>
    </location>
</feature>
<feature type="sequence variant" id="VAR_053462" description="In dbSNP:rs2329834.">
    <original>P</original>
    <variation>L</variation>
    <location>
        <position position="177"/>
    </location>
</feature>
<feature type="sequence variant" id="VAR_017693" description="In dbSNP:rs146792277." evidence="2">
    <original>R</original>
    <variation>G</variation>
    <location>
        <position position="241"/>
    </location>
</feature>
<organism>
    <name type="scientific">Homo sapiens</name>
    <name type="common">Human</name>
    <dbReference type="NCBI Taxonomy" id="9606"/>
    <lineage>
        <taxon>Eukaryota</taxon>
        <taxon>Metazoa</taxon>
        <taxon>Chordata</taxon>
        <taxon>Craniata</taxon>
        <taxon>Vertebrata</taxon>
        <taxon>Euteleostomi</taxon>
        <taxon>Mammalia</taxon>
        <taxon>Eutheria</taxon>
        <taxon>Euarchontoglires</taxon>
        <taxon>Primates</taxon>
        <taxon>Haplorrhini</taxon>
        <taxon>Catarrhini</taxon>
        <taxon>Hominidae</taxon>
        <taxon>Homo</taxon>
    </lineage>
</organism>
<evidence type="ECO:0000269" key="1">
    <source>
    </source>
</evidence>
<evidence type="ECO:0000269" key="2">
    <source>
    </source>
</evidence>
<evidence type="ECO:0000305" key="3"/>
<accession>P60368</accession>
<accession>Q70LJ5</accession>
<keyword id="KW-0025">Alternative splicing</keyword>
<keyword id="KW-0416">Keratin</keyword>
<keyword id="KW-1185">Reference proteome</keyword>
<keyword id="KW-0677">Repeat</keyword>
<reference key="1">
    <citation type="journal article" date="2004" name="Genomics">
        <title>A cluster of 21 keratin-associated protein genes within introns of another gene on human chromosome 21q22.3.</title>
        <authorList>
            <person name="Shibuya K."/>
            <person name="Obayashi I."/>
            <person name="Asakawa S."/>
            <person name="Minoshima S."/>
            <person name="Kudoh J."/>
            <person name="Shimizu N."/>
        </authorList>
    </citation>
    <scope>NUCLEOTIDE SEQUENCE [MRNA]</scope>
    <scope>TISSUE SPECIFICITY</scope>
    <scope>VARIANTS ASP-15; THR-107; PRO-117 AND GLY-241</scope>
    <source>
        <tissue>Hair root</tissue>
    </source>
</reference>
<reference key="2">
    <citation type="journal article" date="2000" name="Nature">
        <title>The DNA sequence of human chromosome 21.</title>
        <authorList>
            <person name="Hattori M."/>
            <person name="Fujiyama A."/>
            <person name="Taylor T.D."/>
            <person name="Watanabe H."/>
            <person name="Yada T."/>
            <person name="Park H.-S."/>
            <person name="Toyoda A."/>
            <person name="Ishii K."/>
            <person name="Totoki Y."/>
            <person name="Choi D.-K."/>
            <person name="Groner Y."/>
            <person name="Soeda E."/>
            <person name="Ohki M."/>
            <person name="Takagi T."/>
            <person name="Sakaki Y."/>
            <person name="Taudien S."/>
            <person name="Blechschmidt K."/>
            <person name="Polley A."/>
            <person name="Menzel U."/>
            <person name="Delabar J."/>
            <person name="Kumpf K."/>
            <person name="Lehmann R."/>
            <person name="Patterson D."/>
            <person name="Reichwald K."/>
            <person name="Rump A."/>
            <person name="Schillhabel M."/>
            <person name="Schudy A."/>
            <person name="Zimmermann W."/>
            <person name="Rosenthal A."/>
            <person name="Kudoh J."/>
            <person name="Shibuya K."/>
            <person name="Kawasaki K."/>
            <person name="Asakawa S."/>
            <person name="Shintani A."/>
            <person name="Sasaki T."/>
            <person name="Nagamine K."/>
            <person name="Mitsuyama S."/>
            <person name="Antonarakis S.E."/>
            <person name="Minoshima S."/>
            <person name="Shimizu N."/>
            <person name="Nordsiek G."/>
            <person name="Hornischer K."/>
            <person name="Brandt P."/>
            <person name="Scharfe M."/>
            <person name="Schoen O."/>
            <person name="Desario A."/>
            <person name="Reichelt J."/>
            <person name="Kauer G."/>
            <person name="Bloecker H."/>
            <person name="Ramser J."/>
            <person name="Beck A."/>
            <person name="Klages S."/>
            <person name="Hennig S."/>
            <person name="Riesselmann L."/>
            <person name="Dagand E."/>
            <person name="Wehrmeyer S."/>
            <person name="Borzym K."/>
            <person name="Gardiner K."/>
            <person name="Nizetic D."/>
            <person name="Francis F."/>
            <person name="Lehrach H."/>
            <person name="Reinhardt R."/>
            <person name="Yaspo M.-L."/>
        </authorList>
    </citation>
    <scope>NUCLEOTIDE SEQUENCE [LARGE SCALE GENOMIC DNA]</scope>
</reference>
<reference key="3">
    <citation type="journal article" date="2004" name="J. Invest. Dermatol.">
        <title>Hair keratin associated proteins: characterization of a second high sulfur KAP gene domain on human chromosome 21.</title>
        <authorList>
            <person name="Rogers M.A."/>
            <person name="Langbein L."/>
            <person name="Winter H."/>
            <person name="Beckmann I."/>
            <person name="Praetzel S."/>
            <person name="Schweizer J."/>
        </authorList>
    </citation>
    <scope>NUCLEOTIDE SEQUENCE [MRNA] OF 219-255</scope>
    <scope>TISSUE SPECIFICITY</scope>
    <source>
        <tissue>Scalp</tissue>
    </source>
</reference>
<name>KR102_HUMAN</name>
<proteinExistence type="evidence at transcript level"/>
<sequence length="255" mass="25616">MAASTMSICSSACTNSWQVDDCPESCCELPCGTPSCCAPAPCLTLVCTPVSCVSSPCCQAACEPSACQSGCTSSCTPSCCQQSSCQPACCTSSPCQQACCVPVCCKPVCCVPVCCGASSCCQQSSCQPACCASSSCQQSCRVPVCCKAVCCVPTCSESSSSCCQQSSCQPACCTSSPCQQSCCVSVCCKPVCCKSICCVPVCSGASSPCCQQSSCQPACCTSSCCRPSSSVSLLCRPVCSRPASCSFSSGQKSSC</sequence>
<dbReference type="EMBL" id="AB076348">
    <property type="protein sequence ID" value="BAD01535.1"/>
    <property type="molecule type" value="mRNA"/>
</dbReference>
<dbReference type="EMBL" id="AP001067">
    <property type="status" value="NOT_ANNOTATED_CDS"/>
    <property type="molecule type" value="Genomic_DNA"/>
</dbReference>
<dbReference type="EMBL" id="AJ566381">
    <property type="protein sequence ID" value="CAD97462.1"/>
    <property type="molecule type" value="mRNA"/>
</dbReference>
<dbReference type="CCDS" id="CCDS42955.1">
    <molecule id="P60368-1"/>
</dbReference>
<dbReference type="RefSeq" id="NP_941966.1">
    <molecule id="P60368-1"/>
    <property type="nucleotide sequence ID" value="NM_198693.4"/>
</dbReference>
<dbReference type="BioGRID" id="132130">
    <property type="interactions" value="1"/>
</dbReference>
<dbReference type="FunCoup" id="P60368">
    <property type="interactions" value="40"/>
</dbReference>
<dbReference type="STRING" id="9606.ENSP00000375479"/>
<dbReference type="BioMuta" id="KRTAP10-2"/>
<dbReference type="DMDM" id="42558948"/>
<dbReference type="MassIVE" id="P60368"/>
<dbReference type="PaxDb" id="9606-ENSP00000375479"/>
<dbReference type="Antibodypedia" id="24290">
    <property type="antibodies" value="4 antibodies from 4 providers"/>
</dbReference>
<dbReference type="DNASU" id="386679"/>
<dbReference type="Ensembl" id="ENST00000391621.1">
    <molecule id="P60368-1"/>
    <property type="protein sequence ID" value="ENSP00000375479.1"/>
    <property type="gene ID" value="ENSG00000205445.3"/>
</dbReference>
<dbReference type="GeneID" id="386679"/>
<dbReference type="KEGG" id="hsa:386679"/>
<dbReference type="MANE-Select" id="ENST00000391621.1">
    <property type="protein sequence ID" value="ENSP00000375479.1"/>
    <property type="RefSeq nucleotide sequence ID" value="NM_198693.4"/>
    <property type="RefSeq protein sequence ID" value="NP_941966.1"/>
</dbReference>
<dbReference type="UCSC" id="uc002zfi.2">
    <molecule id="P60368-1"/>
    <property type="organism name" value="human"/>
</dbReference>
<dbReference type="AGR" id="HGNC:22967"/>
<dbReference type="CTD" id="386679"/>
<dbReference type="GeneCards" id="KRTAP10-2"/>
<dbReference type="HGNC" id="HGNC:22967">
    <property type="gene designation" value="KRTAP10-2"/>
</dbReference>
<dbReference type="HPA" id="ENSG00000205445">
    <property type="expression patterns" value="Tissue enriched (skin)"/>
</dbReference>
<dbReference type="neXtProt" id="NX_P60368"/>
<dbReference type="OpenTargets" id="ENSG00000205445"/>
<dbReference type="PharmGKB" id="PA134989110"/>
<dbReference type="VEuPathDB" id="HostDB:ENSG00000205445"/>
<dbReference type="eggNOG" id="KOG4726">
    <property type="taxonomic scope" value="Eukaryota"/>
</dbReference>
<dbReference type="GeneTree" id="ENSGT00940000163258"/>
<dbReference type="HOGENOM" id="CLU_062832_0_0_1"/>
<dbReference type="InParanoid" id="P60368"/>
<dbReference type="OMA" id="CAGLIEC"/>
<dbReference type="OrthoDB" id="9540251at2759"/>
<dbReference type="PAN-GO" id="P60368">
    <property type="GO annotations" value="0 GO annotations based on evolutionary models"/>
</dbReference>
<dbReference type="TreeFam" id="TF351356"/>
<dbReference type="PathwayCommons" id="P60368"/>
<dbReference type="Reactome" id="R-HSA-6805567">
    <property type="pathway name" value="Keratinization"/>
</dbReference>
<dbReference type="BioGRID-ORCS" id="386679">
    <property type="hits" value="17 hits in 1062 CRISPR screens"/>
</dbReference>
<dbReference type="GenomeRNAi" id="386679"/>
<dbReference type="Pharos" id="P60368">
    <property type="development level" value="Tdark"/>
</dbReference>
<dbReference type="PRO" id="PR:P60368"/>
<dbReference type="Proteomes" id="UP000005640">
    <property type="component" value="Chromosome 21"/>
</dbReference>
<dbReference type="RNAct" id="P60368">
    <property type="molecule type" value="protein"/>
</dbReference>
<dbReference type="Bgee" id="ENSG00000205445">
    <property type="expression patterns" value="Expressed in right uterine tube and 21 other cell types or tissues"/>
</dbReference>
<dbReference type="GO" id="GO:0005829">
    <property type="term" value="C:cytosol"/>
    <property type="evidence" value="ECO:0000304"/>
    <property type="project" value="Reactome"/>
</dbReference>
<dbReference type="GO" id="GO:0045095">
    <property type="term" value="C:keratin filament"/>
    <property type="evidence" value="ECO:0007669"/>
    <property type="project" value="InterPro"/>
</dbReference>
<dbReference type="InterPro" id="IPR002494">
    <property type="entry name" value="KAP"/>
</dbReference>
<dbReference type="Pfam" id="PF13885">
    <property type="entry name" value="Keratin_B2_2"/>
    <property type="match status" value="2"/>
</dbReference>
<gene>
    <name type="primary">KRTAP10-2</name>
    <name type="synonym">KAP10.2</name>
    <name type="synonym">KAP18-2</name>
    <name type="synonym">KRTAP10.2</name>
    <name type="synonym">KRTAP18-2</name>
    <name type="synonym">KRTAP18.2</name>
</gene>